<evidence type="ECO:0000250" key="1">
    <source>
        <dbReference type="UniProtKB" id="P0AB83"/>
    </source>
</evidence>
<evidence type="ECO:0000256" key="2">
    <source>
        <dbReference type="SAM" id="MobiDB-lite"/>
    </source>
</evidence>
<evidence type="ECO:0000269" key="3">
    <source>
    </source>
</evidence>
<evidence type="ECO:0000269" key="4">
    <source>
    </source>
</evidence>
<evidence type="ECO:0000269" key="5">
    <source>
    </source>
</evidence>
<evidence type="ECO:0000269" key="6">
    <source>
    </source>
</evidence>
<evidence type="ECO:0000269" key="7">
    <source>
    </source>
</evidence>
<evidence type="ECO:0000269" key="8">
    <source>
    </source>
</evidence>
<evidence type="ECO:0000269" key="9">
    <source>
    </source>
</evidence>
<evidence type="ECO:0000269" key="10">
    <source>
    </source>
</evidence>
<evidence type="ECO:0000269" key="11">
    <source>
    </source>
</evidence>
<evidence type="ECO:0000269" key="12">
    <source>
    </source>
</evidence>
<evidence type="ECO:0000269" key="13">
    <source>
    </source>
</evidence>
<evidence type="ECO:0000269" key="14">
    <source>
    </source>
</evidence>
<evidence type="ECO:0000269" key="15">
    <source>
    </source>
</evidence>
<evidence type="ECO:0000303" key="16">
    <source>
    </source>
</evidence>
<evidence type="ECO:0000303" key="17">
    <source>
    </source>
</evidence>
<evidence type="ECO:0000305" key="18"/>
<evidence type="ECO:0000305" key="19">
    <source>
    </source>
</evidence>
<evidence type="ECO:0000312" key="20">
    <source>
        <dbReference type="Araport" id="AT2G36490"/>
    </source>
</evidence>
<evidence type="ECO:0000312" key="21">
    <source>
        <dbReference type="EMBL" id="AAD24633.1"/>
    </source>
</evidence>
<evidence type="ECO:0007744" key="22">
    <source>
    </source>
</evidence>
<evidence type="ECO:0007829" key="23">
    <source>
        <dbReference type="PDB" id="7YHO"/>
    </source>
</evidence>
<evidence type="ECO:0007829" key="24">
    <source>
        <dbReference type="PDB" id="7YHP"/>
    </source>
</evidence>
<protein>
    <recommendedName>
        <fullName evidence="18">DNA glycosylase/AP lyase ROS1</fullName>
        <ecNumber evidence="14">4.2.99.18</ecNumber>
    </recommendedName>
    <alternativeName>
        <fullName evidence="16">DEMETER-like protein 1</fullName>
    </alternativeName>
    <alternativeName>
        <fullName evidence="17">Protein REPRESSOR OF SILENCING 1</fullName>
        <shortName evidence="17">Protein ROS1</shortName>
    </alternativeName>
</protein>
<reference key="1">
    <citation type="journal article" date="2002" name="Cell">
        <title>ROS1, a repressor of transcriptional gene silencing in Arabidopsis, encodes a DNA glycosylase/lyase.</title>
        <authorList>
            <person name="Gong Z."/>
            <person name="Morales-Ruiz T."/>
            <person name="Ariza R.R."/>
            <person name="Roldan-Arjona T."/>
            <person name="David L."/>
            <person name="Zhu J.-K."/>
        </authorList>
    </citation>
    <scope>NUCLEOTIDE SEQUENCE [MRNA]</scope>
    <scope>MUTAGENESIS OF ASP-1309</scope>
    <scope>FUNCTION</scope>
    <scope>SUBCELLULAR LOCATION</scope>
    <scope>TISSUE SPECIFICITY</scope>
    <source>
        <strain>cv. C24</strain>
    </source>
</reference>
<reference key="2">
    <citation type="journal article" date="1999" name="Nature">
        <title>Sequence and analysis of chromosome 2 of the plant Arabidopsis thaliana.</title>
        <authorList>
            <person name="Lin X."/>
            <person name="Kaul S."/>
            <person name="Rounsley S.D."/>
            <person name="Shea T.P."/>
            <person name="Benito M.-I."/>
            <person name="Town C.D."/>
            <person name="Fujii C.Y."/>
            <person name="Mason T.M."/>
            <person name="Bowman C.L."/>
            <person name="Barnstead M.E."/>
            <person name="Feldblyum T.V."/>
            <person name="Buell C.R."/>
            <person name="Ketchum K.A."/>
            <person name="Lee J.J."/>
            <person name="Ronning C.M."/>
            <person name="Koo H.L."/>
            <person name="Moffat K.S."/>
            <person name="Cronin L.A."/>
            <person name="Shen M."/>
            <person name="Pai G."/>
            <person name="Van Aken S."/>
            <person name="Umayam L."/>
            <person name="Tallon L.J."/>
            <person name="Gill J.E."/>
            <person name="Adams M.D."/>
            <person name="Carrera A.J."/>
            <person name="Creasy T.H."/>
            <person name="Goodman H.M."/>
            <person name="Somerville C.R."/>
            <person name="Copenhaver G.P."/>
            <person name="Preuss D."/>
            <person name="Nierman W.C."/>
            <person name="White O."/>
            <person name="Eisen J.A."/>
            <person name="Salzberg S.L."/>
            <person name="Fraser C.M."/>
            <person name="Venter J.C."/>
        </authorList>
    </citation>
    <scope>NUCLEOTIDE SEQUENCE [LARGE SCALE GENOMIC DNA]</scope>
    <source>
        <strain>cv. Columbia</strain>
    </source>
</reference>
<reference key="3">
    <citation type="journal article" date="2017" name="Plant J.">
        <title>Araport11: a complete reannotation of the Arabidopsis thaliana reference genome.</title>
        <authorList>
            <person name="Cheng C.Y."/>
            <person name="Krishnakumar V."/>
            <person name="Chan A.P."/>
            <person name="Thibaud-Nissen F."/>
            <person name="Schobel S."/>
            <person name="Town C.D."/>
        </authorList>
    </citation>
    <scope>GENOME REANNOTATION</scope>
    <source>
        <strain>cv. Columbia</strain>
    </source>
</reference>
<reference key="4">
    <citation type="journal article" date="2002" name="Cell">
        <title>DEMETER, a DNA glycosylase domain protein, is required for endosperm gene imprinting and seed viability in Arabidopsis.</title>
        <authorList>
            <person name="Choi Y."/>
            <person name="Gehring M."/>
            <person name="Johnson L."/>
            <person name="Hannon M."/>
            <person name="Harada J.J."/>
            <person name="Goldberg R.B."/>
            <person name="Jacobsen S.E."/>
            <person name="Fischer R.L."/>
        </authorList>
    </citation>
    <scope>NOMENCLATURE</scope>
</reference>
<reference key="5">
    <citation type="journal article" date="2005" name="Curr. Biol.">
        <title>Mutations in a conserved replication protein suppress transcriptional gene silencing in a DNA-methylation-independent manner in Arabidopsis.</title>
        <authorList>
            <person name="Kapoor A."/>
            <person name="Agarwal M."/>
            <person name="Andreucci A."/>
            <person name="Zheng X."/>
            <person name="Gong Z."/>
            <person name="Hasegawa P.M."/>
            <person name="Bressan R.A."/>
            <person name="Zhu J.-K."/>
        </authorList>
    </citation>
    <scope>INTERACTION WITH RPA2A</scope>
</reference>
<reference key="6">
    <citation type="journal article" date="2006" name="Plant Cell">
        <title>ROR1/RPA2A, a putative replication protein A2, functions in epigenetic gene silencing and in regulation of meristem development in Arabidopsis.</title>
        <authorList>
            <person name="Xia R."/>
            <person name="Wang J."/>
            <person name="Liu C."/>
            <person name="Wang Y."/>
            <person name="Wang Y."/>
            <person name="Zhai J."/>
            <person name="Liu J."/>
            <person name="Hong X."/>
            <person name="Cao X."/>
            <person name="Zhu J.-K."/>
            <person name="Gong Z."/>
        </authorList>
    </citation>
    <scope>INTERACTION WITH RPA2A</scope>
</reference>
<reference key="7">
    <citation type="journal article" date="2006" name="Proc. Natl. Acad. Sci. U.S.A.">
        <title>DEMETER and REPRESSOR OF SILENCING 1 encode 5-methylcytosine DNA glycosylases.</title>
        <authorList>
            <person name="Morales-Ruiz T."/>
            <person name="Ortega-Galisteo A.P."/>
            <person name="Ponferrada-Marin M.I."/>
            <person name="Martinez-Macias M.I."/>
            <person name="Ariza R.R."/>
            <person name="Roldan-Arjona T."/>
        </authorList>
    </citation>
    <scope>FUNCTION</scope>
</reference>
<reference key="8">
    <citation type="journal article" date="2007" name="Mol. Cell. Proteomics">
        <title>Multidimensional protein identification technology (MudPIT) analysis of ubiquitinated proteins in plants.</title>
        <authorList>
            <person name="Maor R."/>
            <person name="Jones A."/>
            <person name="Nuehse T.S."/>
            <person name="Studholme D.J."/>
            <person name="Peck S.C."/>
            <person name="Shirasu K."/>
        </authorList>
    </citation>
    <scope>UBIQUITINATION [LARGE SCALE ANALYSIS] AT LYS-901</scope>
    <scope>IDENTIFICATION BY MASS SPECTROMETRY [LARGE SCALE ANALYSIS]</scope>
    <source>
        <strain>cv. Landsberg erecta</strain>
    </source>
</reference>
<reference key="9">
    <citation type="journal article" date="2008" name="Plant Cell Physiol.">
        <title>Interplay of RNA Pol IV and ROS1 during post-embryonic 5S rDNA chromatin remodeling.</title>
        <authorList>
            <person name="Douet J."/>
            <person name="Blanchard B."/>
            <person name="Cuvillier C."/>
            <person name="Tourmente S."/>
        </authorList>
    </citation>
    <scope>FUNCTION</scope>
</reference>
<reference key="10">
    <citation type="journal article" date="2009" name="Nucleic Acids Res.">
        <title>ROS1 5-methylcytosine DNA glycosylase is a slow-turnover catalyst that initiates DNA demethylation in a distributive fashion.</title>
        <authorList>
            <person name="Ponferrada-Marin M.I."/>
            <person name="Roldan-Arjona T."/>
            <person name="Ariza R.R."/>
        </authorList>
    </citation>
    <scope>FUNCTION</scope>
    <scope>SUBSTRATE SPECIFICITY</scope>
</reference>
<reference key="11">
    <citation type="journal article" date="2010" name="J. Biol. Chem.">
        <title>Methylation-independent DNA binding modulates specificity of Repressor of Silencing 1 (ROS1) and facilitates demethylation in long substrates.</title>
        <authorList>
            <person name="Ponferrada-Marin M.I."/>
            <person name="Martinez-Macias M.I."/>
            <person name="Morales-Ruiz T."/>
            <person name="Roldan-Arjona T."/>
            <person name="Ariza R.R."/>
        </authorList>
    </citation>
    <scope>FUNCTION</scope>
    <scope>DOMAIN</scope>
</reference>
<reference key="12">
    <citation type="journal article" date="2012" name="Mol. Cell">
        <title>A DNA 3' phosphatase functions in active DNA demethylation in Arabidopsis.</title>
        <authorList>
            <person name="Martinez-Macias M.I."/>
            <person name="Qian W."/>
            <person name="Miki D."/>
            <person name="Pontes O."/>
            <person name="Liu Y."/>
            <person name="Tang K."/>
            <person name="Liu R."/>
            <person name="Morales-Ruiz T."/>
            <person name="Ariza R.R."/>
            <person name="Roldan-Arjona T."/>
            <person name="Zhu J.K."/>
        </authorList>
    </citation>
    <scope>INTERACTION WITH ZDP</scope>
    <scope>ACTIVITY REGULATION</scope>
</reference>
<reference key="13">
    <citation type="journal article" date="2013" name="J. Biol. Chem.">
        <title>The DNA repair protein XRCC1 functions in the plant DNA demethylation pathway by stimulating cytosine methylation (5-meC) excision, gap tailoring, and DNA ligation.</title>
        <authorList>
            <person name="Martinez-Macias M.I."/>
            <person name="Cordoba-Canero D."/>
            <person name="Ariza R.R."/>
            <person name="Roldan-Arjona T."/>
        </authorList>
    </citation>
    <scope>INTERACTION WITH XRCC1</scope>
    <scope>ACTIVITY REGULATION</scope>
</reference>
<reference key="14">
    <citation type="journal article" date="2013" name="Front. Plant Sci.">
        <title>DDM1 and ROS1 have a role in UV-B induced- and oxidative DNA damage in A. thaliana.</title>
        <authorList>
            <person name="Queesta J.I."/>
            <person name="Fina J.P."/>
            <person name="Casati P."/>
        </authorList>
    </citation>
    <scope>FUNCTION</scope>
    <scope>INDUCTION BY UV-B</scope>
    <scope>DISRUPTION PHENOTYPE</scope>
</reference>
<reference key="15">
    <citation type="journal article" date="2014" name="J. Mol. Biol.">
        <title>The carboxy-terminal domain of ROS1 is essential for 5-methylcytosine DNA glycosylase activity.</title>
        <authorList>
            <person name="Hong S."/>
            <person name="Hashimoto H."/>
            <person name="Kow Y.W."/>
            <person name="Zhang X."/>
            <person name="Cheng X."/>
        </authorList>
    </citation>
    <scope>FUNCTION</scope>
    <scope>CATALYTIC ACTIVITY</scope>
    <scope>MUTAGENESIS OF ASP-971</scope>
    <scope>DOMAIN</scope>
</reference>
<reference key="16">
    <citation type="journal article" date="2014" name="Nucleic Acids Res.">
        <title>AP endonucleases process 5-methylcytosine excision intermediates during active DNA demethylation in Arabidopsis.</title>
        <authorList>
            <person name="Lee J."/>
            <person name="Jang H."/>
            <person name="Shin H."/>
            <person name="Choi W.L."/>
            <person name="Mok Y.G."/>
            <person name="Huh J.H."/>
        </authorList>
    </citation>
    <scope>FUNCTION</scope>
</reference>
<reference key="17">
    <citation type="journal article" date="2015" name="Mol. Cell">
        <title>The methyl-CpG-binding protein MBD7 facilitates active DNA demethylation to limit DNA hyper-methylation and transcriptional gene silencing.</title>
        <authorList>
            <person name="Lang Z."/>
            <person name="Lei M."/>
            <person name="Wang X."/>
            <person name="Tang K."/>
            <person name="Miki D."/>
            <person name="Zhang H."/>
            <person name="Mangrauthia S.K."/>
            <person name="Liu W."/>
            <person name="Nie W."/>
            <person name="Ma G."/>
            <person name="Yan J."/>
            <person name="Duan C.G."/>
            <person name="Hsu C.C."/>
            <person name="Wang C."/>
            <person name="Tao W.A."/>
            <person name="Gong Z."/>
            <person name="Zhu J.K."/>
        </authorList>
    </citation>
    <scope>INTERACTION WITH MBD7; IDM1; IDM2 AND IDM3</scope>
</reference>
<reference key="18">
    <citation type="journal article" date="2015" name="PLoS Genet.">
        <title>An AP endonuclease functions in active DNA dimethylation and gene imprinting in Arabidopsis.</title>
        <authorList>
            <person name="Li Y."/>
            <person name="Cordoba-Canero D."/>
            <person name="Qian W."/>
            <person name="Zhu X."/>
            <person name="Tang K."/>
            <person name="Zhang H."/>
            <person name="Ariza R.R."/>
            <person name="Roldan-Arjona T."/>
            <person name="Zhu J.K."/>
        </authorList>
    </citation>
    <scope>INTERACTION WITH APE1L</scope>
    <scope>SUBCELLULAR LOCATION</scope>
    <scope>DISRUPTION PHENOTYPE</scope>
</reference>
<name>ROS1_ARATH</name>
<proteinExistence type="evidence at protein level"/>
<accession>Q9SJQ6</accession>
<accession>Q7Y1X6</accession>
<organism>
    <name type="scientific">Arabidopsis thaliana</name>
    <name type="common">Mouse-ear cress</name>
    <dbReference type="NCBI Taxonomy" id="3702"/>
    <lineage>
        <taxon>Eukaryota</taxon>
        <taxon>Viridiplantae</taxon>
        <taxon>Streptophyta</taxon>
        <taxon>Embryophyta</taxon>
        <taxon>Tracheophyta</taxon>
        <taxon>Spermatophyta</taxon>
        <taxon>Magnoliopsida</taxon>
        <taxon>eudicotyledons</taxon>
        <taxon>Gunneridae</taxon>
        <taxon>Pentapetalae</taxon>
        <taxon>rosids</taxon>
        <taxon>malvids</taxon>
        <taxon>Brassicales</taxon>
        <taxon>Brassicaceae</taxon>
        <taxon>Camelineae</taxon>
        <taxon>Arabidopsis</taxon>
    </lineage>
</organism>
<gene>
    <name evidence="17" type="primary">ROS1</name>
    <name evidence="16" type="synonym">DML1</name>
    <name evidence="20" type="ordered locus">At2g36490</name>
    <name evidence="21" type="ORF">F1O11.12</name>
</gene>
<comment type="function">
    <text evidence="3 6 7 8 9 12 13 14">Bifunctional DNA glycosylase/lyase, which excises 5-methylcytosine (5-meC) and 5-hydroxymethylcytosine (5-hmeC), leaving an apyrimidinic (AP) site that is subsequently incised by the lyase activity (PubMed:25240767). Generates 3'-phosphor-alpha,beta-unsaturated aldehyde (3'-PUA) as a primary 5-meC excision intermediate (PubMed:25228464). Prevents DNA hypermethylation, specifically in the promoter of otherwise silenced loci. May be involved in DNA repair through its nicking activity on methylated DNA. Binds with similar affinity to both methylated and non-methylated DNA. Highly distributive behavior on DNA substrates containing multiple 5-meC residues. Involved with Pol IV in the remodeling of the 5S rDNA chromatin via DNA methylation modifications during the first days of development post-germination. Participates in UV-B induced- and oxidative DNA damage repair (PubMed:24155752).</text>
</comment>
<comment type="catalytic activity">
    <reaction evidence="14">
        <text>2'-deoxyribonucleotide-(2'-deoxyribose 5'-phosphate)-2'-deoxyribonucleotide-DNA = a 3'-end 2'-deoxyribonucleotide-(2,3-dehydro-2,3-deoxyribose 5'-phosphate)-DNA + a 5'-end 5'-phospho-2'-deoxyribonucleoside-DNA + H(+)</text>
        <dbReference type="Rhea" id="RHEA:66592"/>
        <dbReference type="Rhea" id="RHEA-COMP:13180"/>
        <dbReference type="Rhea" id="RHEA-COMP:16897"/>
        <dbReference type="Rhea" id="RHEA-COMP:17067"/>
        <dbReference type="ChEBI" id="CHEBI:15378"/>
        <dbReference type="ChEBI" id="CHEBI:136412"/>
        <dbReference type="ChEBI" id="CHEBI:157695"/>
        <dbReference type="ChEBI" id="CHEBI:167181"/>
        <dbReference type="EC" id="4.2.99.18"/>
    </reaction>
</comment>
<comment type="cofactor">
    <cofactor evidence="1">
        <name>[4Fe-4S] cluster</name>
        <dbReference type="ChEBI" id="CHEBI:49883"/>
    </cofactor>
    <text evidence="1">Binds 1 [4Fe-4S] cluster. The cluster does not appear to play a role in catalysis, but is probably involved in the proper positioning of the enzyme along the DNA strand.</text>
</comment>
<comment type="activity regulation">
    <text evidence="10 11">Stimulated by ZDP (PubMed:22325353). Stimulated by XRCC1 (PubMed:23316050).</text>
</comment>
<comment type="subunit">
    <text evidence="4 5 10 11 15 19">Interacts (via the central region) with ZDP (PubMed:22325353). Binds to RPA2A (PubMed:16271867, PubMed:16326925). Interacts with XRCC1 (PubMed:23316050). Interacts probably with a complex made of MBD7, IDM1, IDM2 and IDM3 (Probable). Interacts with APE1L (PubMed:25569774).</text>
</comment>
<comment type="subcellular location">
    <subcellularLocation>
        <location evidence="3 15">Nucleus</location>
    </subcellularLocation>
    <subcellularLocation>
        <location evidence="15">Nucleus</location>
        <location evidence="15">Nucleolus</location>
    </subcellularLocation>
    <text evidence="15">Co-localizes in nucleoplasmic foci with APE1L and ZDP, two components of the DNA demethylase machinery.</text>
</comment>
<comment type="tissue specificity">
    <text evidence="3">Expressed ubiquitously in both vegetative and reproductive organs.</text>
</comment>
<comment type="induction">
    <text evidence="12">Down-regulated by UV-B.</text>
</comment>
<comment type="domain">
    <text evidence="9">The N-terminal lysine-rich domain (112-260) is required for non-specific binding to DNA and for efficient activity on 5-meC.</text>
</comment>
<comment type="domain">
    <text evidence="14">The glycosylase domain (510-1073) is inactive on 5-meC and 5-hmeC excisions but retains residual AP activity. Addition of the C-terminal domain (1077-1393) restored partial base excision activity and increases the AP lyase activity.</text>
</comment>
<comment type="domain">
    <text evidence="9">The DEMETER domain, which is present in proteins of the subfamily, is related to the J-domain, but lacks some important conserved residues.</text>
</comment>
<comment type="disruption phenotype">
    <text evidence="12 15">Decreased response to UV-B radiation (PubMed:24155752). No visible phenotype (PubMed:25569774).</text>
</comment>
<comment type="miscellaneous">
    <text evidence="18">Although strongly related to DNA glycosylase proteins, it differs from these proteins. The DNA repair function may not exist.</text>
</comment>
<comment type="miscellaneous">
    <text evidence="19">MBD7 binds to chromatin at high mCG density regions and then recruits IDM2 and IDM3, thus bringing IDM1 to the methylated DNA. The specific histone H3 acetylation marks produced by IDM1 create a chromatin environment that facilitate the binding of ROS1 to erase DNA methylation.</text>
</comment>
<comment type="similarity">
    <text evidence="18">Belongs to the DNA glycosylase family. DEMETER subfamily.</text>
</comment>
<comment type="sequence caution" evidence="18">
    <conflict type="erroneous gene model prediction">
        <sequence resource="EMBL-CDS" id="AAD24633"/>
    </conflict>
</comment>
<keyword id="KW-0002">3D-structure</keyword>
<keyword id="KW-0004">4Fe-4S</keyword>
<keyword id="KW-0010">Activator</keyword>
<keyword id="KW-0238">DNA-binding</keyword>
<keyword id="KW-0408">Iron</keyword>
<keyword id="KW-0411">Iron-sulfur</keyword>
<keyword id="KW-1017">Isopeptide bond</keyword>
<keyword id="KW-0456">Lyase</keyword>
<keyword id="KW-0479">Metal-binding</keyword>
<keyword id="KW-0539">Nucleus</keyword>
<keyword id="KW-1185">Reference proteome</keyword>
<keyword id="KW-0804">Transcription</keyword>
<keyword id="KW-0805">Transcription regulation</keyword>
<keyword id="KW-0832">Ubl conjugation</keyword>
<feature type="chain" id="PRO_0000102246" description="DNA glycosylase/AP lyase ROS1">
    <location>
        <begin position="1"/>
        <end position="1393"/>
    </location>
</feature>
<feature type="region of interest" description="Disordered" evidence="2">
    <location>
        <begin position="1"/>
        <end position="25"/>
    </location>
</feature>
<feature type="region of interest" description="Disordered" evidence="2">
    <location>
        <begin position="98"/>
        <end position="186"/>
    </location>
</feature>
<feature type="region of interest" description="Disordered" evidence="2">
    <location>
        <begin position="237"/>
        <end position="265"/>
    </location>
</feature>
<feature type="region of interest" description="DEMETER">
    <location>
        <begin position="528"/>
        <end position="626"/>
    </location>
</feature>
<feature type="region of interest" description="Disordered" evidence="2">
    <location>
        <begin position="653"/>
        <end position="722"/>
    </location>
</feature>
<feature type="region of interest" description="Disordered" evidence="2">
    <location>
        <begin position="789"/>
        <end position="830"/>
    </location>
</feature>
<feature type="compositionally biased region" description="Low complexity" evidence="2">
    <location>
        <begin position="98"/>
        <end position="108"/>
    </location>
</feature>
<feature type="compositionally biased region" description="Basic residues" evidence="2">
    <location>
        <begin position="117"/>
        <end position="126"/>
    </location>
</feature>
<feature type="compositionally biased region" description="Basic and acidic residues" evidence="2">
    <location>
        <begin position="127"/>
        <end position="138"/>
    </location>
</feature>
<feature type="compositionally biased region" description="Basic and acidic residues" evidence="2">
    <location>
        <begin position="162"/>
        <end position="171"/>
    </location>
</feature>
<feature type="compositionally biased region" description="Basic residues" evidence="2">
    <location>
        <begin position="243"/>
        <end position="256"/>
    </location>
</feature>
<feature type="compositionally biased region" description="Polar residues" evidence="2">
    <location>
        <begin position="653"/>
        <end position="672"/>
    </location>
</feature>
<feature type="compositionally biased region" description="Low complexity" evidence="2">
    <location>
        <begin position="687"/>
        <end position="698"/>
    </location>
</feature>
<feature type="compositionally biased region" description="Basic and acidic residues" evidence="2">
    <location>
        <begin position="699"/>
        <end position="722"/>
    </location>
</feature>
<feature type="compositionally biased region" description="Polar residues" evidence="2">
    <location>
        <begin position="816"/>
        <end position="830"/>
    </location>
</feature>
<feature type="binding site" evidence="1">
    <location>
        <position position="1038"/>
    </location>
    <ligand>
        <name>[4Fe-4S] cluster</name>
        <dbReference type="ChEBI" id="CHEBI:49883"/>
    </ligand>
</feature>
<feature type="binding site" evidence="1">
    <location>
        <position position="1045"/>
    </location>
    <ligand>
        <name>[4Fe-4S] cluster</name>
        <dbReference type="ChEBI" id="CHEBI:49883"/>
    </ligand>
</feature>
<feature type="binding site" evidence="1">
    <location>
        <position position="1048"/>
    </location>
    <ligand>
        <name>[4Fe-4S] cluster</name>
        <dbReference type="ChEBI" id="CHEBI:49883"/>
    </ligand>
</feature>
<feature type="binding site" evidence="1">
    <location>
        <position position="1054"/>
    </location>
    <ligand>
        <name>[4Fe-4S] cluster</name>
        <dbReference type="ChEBI" id="CHEBI:49883"/>
    </ligand>
</feature>
<feature type="cross-link" description="Glycyl lysine isopeptide (Lys-Gly) (interchain with G-Cter in ubiquitin)" evidence="22">
    <location>
        <position position="901"/>
    </location>
</feature>
<feature type="mutagenesis site" description="Abolishes the base excision activity, but not the AP lyase activity." evidence="14">
    <original>D</original>
    <variation>N</variation>
    <location>
        <position position="971"/>
    </location>
</feature>
<feature type="mutagenesis site" description="In ros1-2; loss of activity inducing a transcriptional gene silencing." evidence="3">
    <original>D</original>
    <variation>N</variation>
    <location>
        <position position="1309"/>
    </location>
</feature>
<feature type="helix" evidence="24">
    <location>
        <begin position="561"/>
        <end position="583"/>
    </location>
</feature>
<feature type="helix" evidence="24">
    <location>
        <begin position="596"/>
        <end position="605"/>
    </location>
</feature>
<feature type="strand" evidence="24">
    <location>
        <begin position="607"/>
        <end position="609"/>
    </location>
</feature>
<feature type="helix" evidence="24">
    <location>
        <begin position="611"/>
        <end position="624"/>
    </location>
</feature>
<feature type="helix" evidence="24">
    <location>
        <begin position="885"/>
        <end position="890"/>
    </location>
</feature>
<feature type="helix" evidence="24">
    <location>
        <begin position="893"/>
        <end position="899"/>
    </location>
</feature>
<feature type="helix" evidence="24">
    <location>
        <begin position="901"/>
        <end position="903"/>
    </location>
</feature>
<feature type="helix" evidence="24">
    <location>
        <begin position="906"/>
        <end position="924"/>
    </location>
</feature>
<feature type="strand" evidence="24">
    <location>
        <begin position="925"/>
        <end position="927"/>
    </location>
</feature>
<feature type="helix" evidence="24">
    <location>
        <begin position="930"/>
        <end position="933"/>
    </location>
</feature>
<feature type="helix" evidence="24">
    <location>
        <begin position="937"/>
        <end position="945"/>
    </location>
</feature>
<feature type="helix" evidence="24">
    <location>
        <begin position="952"/>
        <end position="961"/>
    </location>
</feature>
<feature type="helix" evidence="24">
    <location>
        <begin position="972"/>
        <end position="980"/>
    </location>
</feature>
<feature type="helix" evidence="24">
    <location>
        <begin position="1006"/>
        <end position="1011"/>
    </location>
</feature>
<feature type="helix" evidence="24">
    <location>
        <begin position="1013"/>
        <end position="1015"/>
    </location>
</feature>
<feature type="strand" evidence="24">
    <location>
        <begin position="1016"/>
        <end position="1018"/>
    </location>
</feature>
<feature type="helix" evidence="24">
    <location>
        <begin position="1020"/>
        <end position="1036"/>
    </location>
</feature>
<feature type="strand" evidence="24">
    <location>
        <begin position="1040"/>
        <end position="1042"/>
    </location>
</feature>
<feature type="turn" evidence="24">
    <location>
        <begin position="1045"/>
        <end position="1047"/>
    </location>
</feature>
<feature type="helix" evidence="24">
    <location>
        <begin position="1051"/>
        <end position="1053"/>
    </location>
</feature>
<feature type="helix" evidence="24">
    <location>
        <begin position="1056"/>
        <end position="1060"/>
    </location>
</feature>
<feature type="strand" evidence="24">
    <location>
        <begin position="1205"/>
        <end position="1208"/>
    </location>
</feature>
<feature type="helix" evidence="24">
    <location>
        <begin position="1213"/>
        <end position="1215"/>
    </location>
</feature>
<feature type="strand" evidence="24">
    <location>
        <begin position="1229"/>
        <end position="1233"/>
    </location>
</feature>
<feature type="strand" evidence="24">
    <location>
        <begin position="1279"/>
        <end position="1285"/>
    </location>
</feature>
<feature type="helix" evidence="24">
    <location>
        <begin position="1286"/>
        <end position="1290"/>
    </location>
</feature>
<feature type="helix" evidence="24">
    <location>
        <begin position="1295"/>
        <end position="1298"/>
    </location>
</feature>
<feature type="strand" evidence="24">
    <location>
        <begin position="1306"/>
        <end position="1309"/>
    </location>
</feature>
<feature type="helix" evidence="24">
    <location>
        <begin position="1310"/>
        <end position="1314"/>
    </location>
</feature>
<feature type="turn" evidence="24">
    <location>
        <begin position="1321"/>
        <end position="1324"/>
    </location>
</feature>
<feature type="strand" evidence="23">
    <location>
        <begin position="1329"/>
        <end position="1334"/>
    </location>
</feature>
<feature type="helix" evidence="24">
    <location>
        <begin position="1338"/>
        <end position="1341"/>
    </location>
</feature>
<feature type="turn" evidence="24">
    <location>
        <begin position="1342"/>
        <end position="1344"/>
    </location>
</feature>
<feature type="helix" evidence="24">
    <location>
        <begin position="1347"/>
        <end position="1355"/>
    </location>
</feature>
<feature type="strand" evidence="23">
    <location>
        <begin position="1357"/>
        <end position="1360"/>
    </location>
</feature>
<feature type="strand" evidence="24">
    <location>
        <begin position="1363"/>
        <end position="1365"/>
    </location>
</feature>
<feature type="turn" evidence="24">
    <location>
        <begin position="1366"/>
        <end position="1369"/>
    </location>
</feature>
<feature type="strand" evidence="24">
    <location>
        <begin position="1370"/>
        <end position="1372"/>
    </location>
</feature>
<feature type="turn" evidence="24">
    <location>
        <begin position="1376"/>
        <end position="1378"/>
    </location>
</feature>
<dbReference type="EC" id="4.2.99.18" evidence="14"/>
<dbReference type="EMBL" id="AY286009">
    <property type="protein sequence ID" value="AAP37178.1"/>
    <property type="molecule type" value="mRNA"/>
</dbReference>
<dbReference type="EMBL" id="AC006919">
    <property type="protein sequence ID" value="AAD24633.1"/>
    <property type="status" value="ALT_SEQ"/>
    <property type="molecule type" value="Genomic_DNA"/>
</dbReference>
<dbReference type="EMBL" id="CP002685">
    <property type="protein sequence ID" value="AEC09263.1"/>
    <property type="molecule type" value="Genomic_DNA"/>
</dbReference>
<dbReference type="PIR" id="D84781">
    <property type="entry name" value="D84781"/>
</dbReference>
<dbReference type="RefSeq" id="NP_181190.3">
    <property type="nucleotide sequence ID" value="NM_129207.5"/>
</dbReference>
<dbReference type="PDB" id="7YHO">
    <property type="method" value="EM"/>
    <property type="resolution" value="3.30 A"/>
    <property type="chains" value="A=511-1393"/>
</dbReference>
<dbReference type="PDB" id="7YHP">
    <property type="method" value="EM"/>
    <property type="resolution" value="3.10 A"/>
    <property type="chains" value="A=511-1393"/>
</dbReference>
<dbReference type="PDB" id="7YHQ">
    <property type="method" value="EM"/>
    <property type="resolution" value="3.90 A"/>
    <property type="chains" value="A=511-1393"/>
</dbReference>
<dbReference type="PDBsum" id="7YHO"/>
<dbReference type="PDBsum" id="7YHP"/>
<dbReference type="PDBsum" id="7YHQ"/>
<dbReference type="EMDB" id="EMD-33832"/>
<dbReference type="EMDB" id="EMD-33835"/>
<dbReference type="EMDB" id="EMD-33836"/>
<dbReference type="SMR" id="Q9SJQ6"/>
<dbReference type="BioGRID" id="3568">
    <property type="interactions" value="12"/>
</dbReference>
<dbReference type="FunCoup" id="Q9SJQ6">
    <property type="interactions" value="1"/>
</dbReference>
<dbReference type="STRING" id="3702.Q9SJQ6"/>
<dbReference type="iPTMnet" id="Q9SJQ6"/>
<dbReference type="PaxDb" id="3702-AT2G36490.1"/>
<dbReference type="ProteomicsDB" id="227970"/>
<dbReference type="EnsemblPlants" id="AT2G36490.1">
    <property type="protein sequence ID" value="AT2G36490.1"/>
    <property type="gene ID" value="AT2G36490"/>
</dbReference>
<dbReference type="GeneID" id="818224"/>
<dbReference type="Gramene" id="AT2G36490.1">
    <property type="protein sequence ID" value="AT2G36490.1"/>
    <property type="gene ID" value="AT2G36490"/>
</dbReference>
<dbReference type="KEGG" id="ath:AT2G36490"/>
<dbReference type="Araport" id="AT2G36490"/>
<dbReference type="TAIR" id="AT2G36490">
    <property type="gene designation" value="DML1"/>
</dbReference>
<dbReference type="eggNOG" id="ENOG502QQKH">
    <property type="taxonomic scope" value="Eukaryota"/>
</dbReference>
<dbReference type="HOGENOM" id="CLU_000567_3_1_1"/>
<dbReference type="InParanoid" id="Q9SJQ6"/>
<dbReference type="OMA" id="ENCTHFV"/>
<dbReference type="PhylomeDB" id="Q9SJQ6"/>
<dbReference type="PRO" id="PR:Q9SJQ6"/>
<dbReference type="Proteomes" id="UP000006548">
    <property type="component" value="Chromosome 2"/>
</dbReference>
<dbReference type="ExpressionAtlas" id="Q9SJQ6">
    <property type="expression patterns" value="baseline and differential"/>
</dbReference>
<dbReference type="GO" id="GO:0005730">
    <property type="term" value="C:nucleolus"/>
    <property type="evidence" value="ECO:0007669"/>
    <property type="project" value="UniProtKB-SubCell"/>
</dbReference>
<dbReference type="GO" id="GO:0005634">
    <property type="term" value="C:nucleus"/>
    <property type="evidence" value="ECO:0000314"/>
    <property type="project" value="TAIR"/>
</dbReference>
<dbReference type="GO" id="GO:0051539">
    <property type="term" value="F:4 iron, 4 sulfur cluster binding"/>
    <property type="evidence" value="ECO:0007669"/>
    <property type="project" value="UniProtKB-KW"/>
</dbReference>
<dbReference type="GO" id="GO:0140078">
    <property type="term" value="F:class I DNA-(apurinic or apyrimidinic site) endonuclease activity"/>
    <property type="evidence" value="ECO:0007669"/>
    <property type="project" value="UniProtKB-EC"/>
</dbReference>
<dbReference type="GO" id="GO:0003677">
    <property type="term" value="F:DNA binding"/>
    <property type="evidence" value="ECO:0007669"/>
    <property type="project" value="UniProtKB-KW"/>
</dbReference>
<dbReference type="GO" id="GO:0035514">
    <property type="term" value="F:DNA demethylase activity"/>
    <property type="evidence" value="ECO:0007669"/>
    <property type="project" value="InterPro"/>
</dbReference>
<dbReference type="GO" id="GO:0019104">
    <property type="term" value="F:DNA N-glycosylase activity"/>
    <property type="evidence" value="ECO:0000314"/>
    <property type="project" value="TAIR"/>
</dbReference>
<dbReference type="GO" id="GO:0003906">
    <property type="term" value="F:DNA-(apurinic or apyrimidinic site) endonuclease activity"/>
    <property type="evidence" value="ECO:0000314"/>
    <property type="project" value="TAIR"/>
</dbReference>
<dbReference type="GO" id="GO:0046872">
    <property type="term" value="F:metal ion binding"/>
    <property type="evidence" value="ECO:0007669"/>
    <property type="project" value="UniProtKB-KW"/>
</dbReference>
<dbReference type="GO" id="GO:0006284">
    <property type="term" value="P:base-excision repair"/>
    <property type="evidence" value="ECO:0007669"/>
    <property type="project" value="InterPro"/>
</dbReference>
<dbReference type="GO" id="GO:0141166">
    <property type="term" value="P:chromosomal 5-methylcytosine DNA demethylation pathway"/>
    <property type="evidence" value="ECO:0007669"/>
    <property type="project" value="InterPro"/>
</dbReference>
<dbReference type="GO" id="GO:0050832">
    <property type="term" value="P:defense response to fungus"/>
    <property type="evidence" value="ECO:0000315"/>
    <property type="project" value="TAIR"/>
</dbReference>
<dbReference type="GO" id="GO:0006281">
    <property type="term" value="P:DNA repair"/>
    <property type="evidence" value="ECO:0000315"/>
    <property type="project" value="TAIR"/>
</dbReference>
<dbReference type="CDD" id="cd00056">
    <property type="entry name" value="ENDO3c"/>
    <property type="match status" value="1"/>
</dbReference>
<dbReference type="FunFam" id="1.10.1670.10:FF:000004">
    <property type="entry name" value="DNA glycosylase/AP lyase ROS1"/>
    <property type="match status" value="1"/>
</dbReference>
<dbReference type="Gene3D" id="1.10.1670.10">
    <property type="entry name" value="Helix-hairpin-Helix base-excision DNA repair enzymes (C-terminal)"/>
    <property type="match status" value="1"/>
</dbReference>
<dbReference type="Gene3D" id="1.10.340.30">
    <property type="entry name" value="Hypothetical protein, domain 2"/>
    <property type="match status" value="1"/>
</dbReference>
<dbReference type="InterPro" id="IPR044811">
    <property type="entry name" value="DME/ROS1"/>
</dbReference>
<dbReference type="InterPro" id="IPR011257">
    <property type="entry name" value="DNA_glycosylase"/>
</dbReference>
<dbReference type="InterPro" id="IPR003651">
    <property type="entry name" value="Endonuclease3_FeS-loop_motif"/>
</dbReference>
<dbReference type="InterPro" id="IPR003265">
    <property type="entry name" value="HhH-GPD_domain"/>
</dbReference>
<dbReference type="InterPro" id="IPR023170">
    <property type="entry name" value="HhH_base_excis_C"/>
</dbReference>
<dbReference type="InterPro" id="IPR028924">
    <property type="entry name" value="Perm-CXXC"/>
</dbReference>
<dbReference type="InterPro" id="IPR028925">
    <property type="entry name" value="RRM_DME"/>
</dbReference>
<dbReference type="PANTHER" id="PTHR46213:SF13">
    <property type="entry name" value="DEMETER-LIKE PROTEIN 2-RELATED"/>
    <property type="match status" value="1"/>
</dbReference>
<dbReference type="PANTHER" id="PTHR46213">
    <property type="entry name" value="TRANSCRIPTIONAL ACTIVATOR DEMETER"/>
    <property type="match status" value="1"/>
</dbReference>
<dbReference type="Pfam" id="PF15629">
    <property type="entry name" value="Perm-CXXC"/>
    <property type="match status" value="1"/>
</dbReference>
<dbReference type="Pfam" id="PF15628">
    <property type="entry name" value="RRM_DME"/>
    <property type="match status" value="1"/>
</dbReference>
<dbReference type="SMART" id="SM00478">
    <property type="entry name" value="ENDO3c"/>
    <property type="match status" value="1"/>
</dbReference>
<dbReference type="SMART" id="SM00525">
    <property type="entry name" value="FES"/>
    <property type="match status" value="1"/>
</dbReference>
<dbReference type="SUPFAM" id="SSF48150">
    <property type="entry name" value="DNA-glycosylase"/>
    <property type="match status" value="1"/>
</dbReference>
<sequence>MEKQRREESSFQQPPWIPQTPMKPFSPICPYTVEDQYHSSQLEERRFVGNKDMSGLDHLSFGDLLALANTASLIFSGQTPIPTRNTEVMQKGTEEVESLSSVSNNVAEQILKTPEKPKRKKHRPKVRREAKPKREPKPRAPRKSVVTDGQESKTPKRKYVRKKVEVSKDQDATPVESSAAVETSTRPKRLCRRVLDFEAENGENQTNGDIREAGEMESALQEKQLDSGNQELKDCLLSAPSTPKRKRSQGKRKGVQPKKNGSNLEEVDISMAQAAKRRQGPTCCDMNLSGIQYDEQCDYQKMHWLYSPNLQQGGMRYDAICSKVFSGQQHNYVSAFHATCYSSTSQLSANRVLTVEERREGIFQGRQESELNVLSDKIDTPIKKKTTGHARFRNLSSMNKLVEVPEHLTSGYCSKPQQNNKILVDTRVTVSKKKPTKSEKSQTKQKNLLPNLCRFPPSFTGLSPDELWKRRNSIETISELLRLLDINREHSETALVPYTMNSQIVLFGGGAGAIVPVTPVKKPRPRPKVDLDDETDRVWKLLLENINSEGVDGSDEQKAKWWEEERNVFRGRADSFIARMHLVQGDRRFTPWKGSVVDSVVGVFLTQNVSDHLSSSAFMSLASQFPVPFVPSSNFDAGTSSMPSIQITYLDSEETMSSPPDHNHSSVTLKNTQPDEEKDYVPSNETSRSSSEIAISAHESVDKTTDSKEYVDSDRKGSSVEVDKTDEKCRVLNLFPSEDSALTCQHSMVSDAPQNTERAGSSSEIDLEGEYRTSFMKLLQGVQVSLEDSNQVSPNMSPGDCSSEIKGFQSMKEPTKSSVDSSEPGCCSQQDGDVLSCQKPTLKEKGKKVLKEEKKAFDWDCLRREAQARAGIREKTRSTMDTVDWKAIRAADVKEVAETIKSRGMNHKLAERIQGFLDRLVNDHGSIDLEWLRDVPPDKAKEYLLSFNGLGLKSVECVRLLTLHHLAFPVDTNVGRIAVRLGWVPLQPLPESLQLHLLEMYPMLESIQKYLWPRLCKLDQKTLYELHYQMITFGKVFCTKSKPNCNACPMKGECRHFASAFASARLALPSTEKGMGTPDKNPLPLHLPEPFQREQGSEVVQHSEPAKKVTCCEPIIEEPASPEPETAEVSIADIEEAFFEDPEEIPTIRLNMDAFTSNLKKIMEHNKELQDGNMSSALVALTAETASLPMPKLKNISQLRTEHRVYELPDEHPLLAQLEKREPDDPCSYLLAIWTPGETADSIQPSVSTCIFQANGMLCDEETCFSCNSIKETRSQIVRGTILIPCRTAMRGSFPLNGTYFQVNEVFADHASSLNPINVPRELIWELPRRTVYFGTSVPTIFKGLSTEKIQACFWKGYVCVRGFDRKTRGPKPLIARLHFPASKLKGQQANLA</sequence>